<protein>
    <recommendedName>
        <fullName>Phosducin</fullName>
        <shortName>PHD</shortName>
    </recommendedName>
    <alternativeName>
        <fullName>33 kDa phototransducing protein</fullName>
    </alternativeName>
    <alternativeName>
        <fullName>Protein MEKA</fullName>
    </alternativeName>
</protein>
<feature type="chain" id="PRO_0000163752" description="Phosducin">
    <location>
        <begin position="1"/>
        <end position="246"/>
    </location>
</feature>
<feature type="domain" description="Phosducin" evidence="3">
    <location>
        <begin position="1"/>
        <end position="244"/>
    </location>
</feature>
<feature type="region of interest" description="Disordered" evidence="4">
    <location>
        <begin position="1"/>
        <end position="70"/>
    </location>
</feature>
<feature type="region of interest" description="Thioredoxin fold" evidence="1">
    <location>
        <begin position="111"/>
        <end position="246"/>
    </location>
</feature>
<feature type="compositionally biased region" description="Acidic residues" evidence="4">
    <location>
        <begin position="1"/>
        <end position="14"/>
    </location>
</feature>
<feature type="compositionally biased region" description="Basic and acidic residues" evidence="4">
    <location>
        <begin position="60"/>
        <end position="69"/>
    </location>
</feature>
<feature type="modified residue" description="Phosphoserine; by PKA" evidence="2">
    <location>
        <position position="73"/>
    </location>
</feature>
<feature type="splice variant" id="VSP_043880" description="In isoform 2." evidence="6">
    <location>
        <begin position="1"/>
        <end position="52"/>
    </location>
</feature>
<feature type="splice variant" id="VSP_053778" description="In isoform 3." evidence="6">
    <original>M</original>
    <variation>MPESLDSPTSGRPGVTTHSTRTPGTEIQTIISNPVPKM</variation>
    <location>
        <position position="1"/>
    </location>
</feature>
<feature type="sequence conflict" description="In Ref. 2; AAA36210." evidence="7" ref="2">
    <original>I</original>
    <variation>L</variation>
    <location>
        <position position="140"/>
    </location>
</feature>
<accession>P20941</accession>
<accession>Q14816</accession>
<accession>Q9UP22</accession>
<accession>Q9UP23</accession>
<organism>
    <name type="scientific">Homo sapiens</name>
    <name type="common">Human</name>
    <dbReference type="NCBI Taxonomy" id="9606"/>
    <lineage>
        <taxon>Eukaryota</taxon>
        <taxon>Metazoa</taxon>
        <taxon>Chordata</taxon>
        <taxon>Craniata</taxon>
        <taxon>Vertebrata</taxon>
        <taxon>Euteleostomi</taxon>
        <taxon>Mammalia</taxon>
        <taxon>Eutheria</taxon>
        <taxon>Euarchontoglires</taxon>
        <taxon>Primates</taxon>
        <taxon>Haplorrhini</taxon>
        <taxon>Catarrhini</taxon>
        <taxon>Hominidae</taxon>
        <taxon>Homo</taxon>
    </lineage>
</organism>
<evidence type="ECO:0000250" key="1"/>
<evidence type="ECO:0000250" key="2">
    <source>
        <dbReference type="UniProtKB" id="P19632"/>
    </source>
</evidence>
<evidence type="ECO:0000255" key="3"/>
<evidence type="ECO:0000256" key="4">
    <source>
        <dbReference type="SAM" id="MobiDB-lite"/>
    </source>
</evidence>
<evidence type="ECO:0000269" key="5">
    <source>
    </source>
</evidence>
<evidence type="ECO:0000303" key="6">
    <source>
    </source>
</evidence>
<evidence type="ECO:0000305" key="7"/>
<comment type="function">
    <text evidence="5">May participate in the regulation of visual phototransduction or in the integration of photoreceptor metabolism. Inhibits the transcriptional activation activity of the cone-rod homeobox CRX.</text>
</comment>
<comment type="subunit">
    <text evidence="5">Forms a complex with the beta and gamma subunits of the GTP-binding protein, transducin. Interacts with CRX.</text>
</comment>
<comment type="subcellular location">
    <subcellularLocation>
        <location evidence="5">Cytoplasm</location>
        <location evidence="5">Cytosol</location>
    </subcellularLocation>
    <subcellularLocation>
        <location evidence="5">Nucleus</location>
    </subcellularLocation>
    <subcellularLocation>
        <location evidence="2">Cell projection</location>
        <location evidence="2">Cilium</location>
        <location evidence="2">Photoreceptor outer segment</location>
    </subcellularLocation>
    <subcellularLocation>
        <location evidence="2">Photoreceptor inner segment</location>
    </subcellularLocation>
</comment>
<comment type="subcellular location">
    <molecule>Isoform 2</molecule>
    <subcellularLocation>
        <location evidence="5">Nucleus</location>
    </subcellularLocation>
</comment>
<comment type="alternative products">
    <event type="alternative splicing"/>
    <isoform>
        <id>P20941-1</id>
        <name>1</name>
        <sequence type="displayed"/>
    </isoform>
    <isoform>
        <id>P20941-2</id>
        <name>2</name>
        <name>PhLOP1</name>
        <sequence type="described" ref="VSP_043880"/>
    </isoform>
    <isoform>
        <id>P20941-3</id>
        <name>3</name>
        <sequence type="described" ref="VSP_053778"/>
    </isoform>
</comment>
<comment type="PTM">
    <text>Light-induced changes in cyclic nucleotide levels modulate the phosphorylation of this protein by cAMP kinase.</text>
</comment>
<comment type="similarity">
    <text evidence="7">Belongs to the phosducin family.</text>
</comment>
<name>PHOS_HUMAN</name>
<gene>
    <name type="primary">PDC</name>
</gene>
<proteinExistence type="evidence at protein level"/>
<reference key="1">
    <citation type="journal article" date="1990" name="Gene">
        <title>Analysis of the human, bovine and rat 33-kDa proteins and cDNA in retina and pineal gland.</title>
        <authorList>
            <person name="Abe T."/>
            <person name="Nakabayashi H."/>
            <person name="Tamada H."/>
            <person name="Takagi T."/>
            <person name="Sakuragi S."/>
            <person name="Yamaki K."/>
            <person name="Shinohara T."/>
        </authorList>
    </citation>
    <scope>NUCLEOTIDE SEQUENCE [MRNA] (ISOFORM 1)</scope>
    <source>
        <tissue>Pineal gland</tissue>
        <tissue>Retina</tissue>
    </source>
</reference>
<reference key="2">
    <citation type="journal article" date="1990" name="Biochem. Biophys. Res. Commun.">
        <title>Isolation and analysis of the human MEKA gene encoding a retina-specific protein.</title>
        <authorList>
            <person name="Watanabe Y."/>
            <person name="Kawasaki K."/>
            <person name="Miki N."/>
            <person name="Kuo C.H."/>
        </authorList>
    </citation>
    <scope>NUCLEOTIDE SEQUENCE [GENOMIC DNA]</scope>
</reference>
<reference key="3">
    <citation type="journal article" date="2000" name="Mol. Cell. Biol.">
        <title>Modulation of CRX transactivation activity by phosducin isoforms.</title>
        <authorList>
            <person name="Zhu X."/>
            <person name="Craft C.M."/>
        </authorList>
    </citation>
    <scope>NUCLEOTIDE SEQUENCE [MRNA] (ISOFORMS 2 AND 3)</scope>
    <scope>FUNCTION</scope>
    <scope>INTERACTION WITH CRX</scope>
    <scope>SUBCELLULAR LOCATION</scope>
    <scope>ALTERNATIVE SPLICING</scope>
    <source>
        <tissue>Retina</tissue>
    </source>
</reference>
<reference key="4">
    <citation type="journal article" date="2006" name="Nature">
        <title>The DNA sequence and biological annotation of human chromosome 1.</title>
        <authorList>
            <person name="Gregory S.G."/>
            <person name="Barlow K.F."/>
            <person name="McLay K.E."/>
            <person name="Kaul R."/>
            <person name="Swarbreck D."/>
            <person name="Dunham A."/>
            <person name="Scott C.E."/>
            <person name="Howe K.L."/>
            <person name="Woodfine K."/>
            <person name="Spencer C.C.A."/>
            <person name="Jones M.C."/>
            <person name="Gillson C."/>
            <person name="Searle S."/>
            <person name="Zhou Y."/>
            <person name="Kokocinski F."/>
            <person name="McDonald L."/>
            <person name="Evans R."/>
            <person name="Phillips K."/>
            <person name="Atkinson A."/>
            <person name="Cooper R."/>
            <person name="Jones C."/>
            <person name="Hall R.E."/>
            <person name="Andrews T.D."/>
            <person name="Lloyd C."/>
            <person name="Ainscough R."/>
            <person name="Almeida J.P."/>
            <person name="Ambrose K.D."/>
            <person name="Anderson F."/>
            <person name="Andrew R.W."/>
            <person name="Ashwell R.I.S."/>
            <person name="Aubin K."/>
            <person name="Babbage A.K."/>
            <person name="Bagguley C.L."/>
            <person name="Bailey J."/>
            <person name="Beasley H."/>
            <person name="Bethel G."/>
            <person name="Bird C.P."/>
            <person name="Bray-Allen S."/>
            <person name="Brown J.Y."/>
            <person name="Brown A.J."/>
            <person name="Buckley D."/>
            <person name="Burton J."/>
            <person name="Bye J."/>
            <person name="Carder C."/>
            <person name="Chapman J.C."/>
            <person name="Clark S.Y."/>
            <person name="Clarke G."/>
            <person name="Clee C."/>
            <person name="Cobley V."/>
            <person name="Collier R.E."/>
            <person name="Corby N."/>
            <person name="Coville G.J."/>
            <person name="Davies J."/>
            <person name="Deadman R."/>
            <person name="Dunn M."/>
            <person name="Earthrowl M."/>
            <person name="Ellington A.G."/>
            <person name="Errington H."/>
            <person name="Frankish A."/>
            <person name="Frankland J."/>
            <person name="French L."/>
            <person name="Garner P."/>
            <person name="Garnett J."/>
            <person name="Gay L."/>
            <person name="Ghori M.R.J."/>
            <person name="Gibson R."/>
            <person name="Gilby L.M."/>
            <person name="Gillett W."/>
            <person name="Glithero R.J."/>
            <person name="Grafham D.V."/>
            <person name="Griffiths C."/>
            <person name="Griffiths-Jones S."/>
            <person name="Grocock R."/>
            <person name="Hammond S."/>
            <person name="Harrison E.S.I."/>
            <person name="Hart E."/>
            <person name="Haugen E."/>
            <person name="Heath P.D."/>
            <person name="Holmes S."/>
            <person name="Holt K."/>
            <person name="Howden P.J."/>
            <person name="Hunt A.R."/>
            <person name="Hunt S.E."/>
            <person name="Hunter G."/>
            <person name="Isherwood J."/>
            <person name="James R."/>
            <person name="Johnson C."/>
            <person name="Johnson D."/>
            <person name="Joy A."/>
            <person name="Kay M."/>
            <person name="Kershaw J.K."/>
            <person name="Kibukawa M."/>
            <person name="Kimberley A.M."/>
            <person name="King A."/>
            <person name="Knights A.J."/>
            <person name="Lad H."/>
            <person name="Laird G."/>
            <person name="Lawlor S."/>
            <person name="Leongamornlert D.A."/>
            <person name="Lloyd D.M."/>
            <person name="Loveland J."/>
            <person name="Lovell J."/>
            <person name="Lush M.J."/>
            <person name="Lyne R."/>
            <person name="Martin S."/>
            <person name="Mashreghi-Mohammadi M."/>
            <person name="Matthews L."/>
            <person name="Matthews N.S.W."/>
            <person name="McLaren S."/>
            <person name="Milne S."/>
            <person name="Mistry S."/>
            <person name="Moore M.J.F."/>
            <person name="Nickerson T."/>
            <person name="O'Dell C.N."/>
            <person name="Oliver K."/>
            <person name="Palmeiri A."/>
            <person name="Palmer S.A."/>
            <person name="Parker A."/>
            <person name="Patel D."/>
            <person name="Pearce A.V."/>
            <person name="Peck A.I."/>
            <person name="Pelan S."/>
            <person name="Phelps K."/>
            <person name="Phillimore B.J."/>
            <person name="Plumb R."/>
            <person name="Rajan J."/>
            <person name="Raymond C."/>
            <person name="Rouse G."/>
            <person name="Saenphimmachak C."/>
            <person name="Sehra H.K."/>
            <person name="Sheridan E."/>
            <person name="Shownkeen R."/>
            <person name="Sims S."/>
            <person name="Skuce C.D."/>
            <person name="Smith M."/>
            <person name="Steward C."/>
            <person name="Subramanian S."/>
            <person name="Sycamore N."/>
            <person name="Tracey A."/>
            <person name="Tromans A."/>
            <person name="Van Helmond Z."/>
            <person name="Wall M."/>
            <person name="Wallis J.M."/>
            <person name="White S."/>
            <person name="Whitehead S.L."/>
            <person name="Wilkinson J.E."/>
            <person name="Willey D.L."/>
            <person name="Williams H."/>
            <person name="Wilming L."/>
            <person name="Wray P.W."/>
            <person name="Wu Z."/>
            <person name="Coulson A."/>
            <person name="Vaudin M."/>
            <person name="Sulston J.E."/>
            <person name="Durbin R.M."/>
            <person name="Hubbard T."/>
            <person name="Wooster R."/>
            <person name="Dunham I."/>
            <person name="Carter N.P."/>
            <person name="McVean G."/>
            <person name="Ross M.T."/>
            <person name="Harrow J."/>
            <person name="Olson M.V."/>
            <person name="Beck S."/>
            <person name="Rogers J."/>
            <person name="Bentley D.R."/>
        </authorList>
    </citation>
    <scope>NUCLEOTIDE SEQUENCE [LARGE SCALE GENOMIC DNA]</scope>
</reference>
<reference key="5">
    <citation type="submission" date="2005-07" db="EMBL/GenBank/DDBJ databases">
        <authorList>
            <person name="Mural R.J."/>
            <person name="Istrail S."/>
            <person name="Sutton G."/>
            <person name="Florea L."/>
            <person name="Halpern A.L."/>
            <person name="Mobarry C.M."/>
            <person name="Lippert R."/>
            <person name="Walenz B."/>
            <person name="Shatkay H."/>
            <person name="Dew I."/>
            <person name="Miller J.R."/>
            <person name="Flanigan M.J."/>
            <person name="Edwards N.J."/>
            <person name="Bolanos R."/>
            <person name="Fasulo D."/>
            <person name="Halldorsson B.V."/>
            <person name="Hannenhalli S."/>
            <person name="Turner R."/>
            <person name="Yooseph S."/>
            <person name="Lu F."/>
            <person name="Nusskern D.R."/>
            <person name="Shue B.C."/>
            <person name="Zheng X.H."/>
            <person name="Zhong F."/>
            <person name="Delcher A.L."/>
            <person name="Huson D.H."/>
            <person name="Kravitz S.A."/>
            <person name="Mouchard L."/>
            <person name="Reinert K."/>
            <person name="Remington K.A."/>
            <person name="Clark A.G."/>
            <person name="Waterman M.S."/>
            <person name="Eichler E.E."/>
            <person name="Adams M.D."/>
            <person name="Hunkapiller M.W."/>
            <person name="Myers E.W."/>
            <person name="Venter J.C."/>
        </authorList>
    </citation>
    <scope>NUCLEOTIDE SEQUENCE [LARGE SCALE GENOMIC DNA]</scope>
</reference>
<sequence>MEEAKSQSLEEDFEGQATHTGPKGVINDWRKFKLESQDSDSIPPSKKEILRQMSSPQSRNGKDSKERVSRKMSIQEYELIHKEKEDENCLRKYRRQCMQDMHQKLSFGPRYGFVYELETGKQFLETIEKELKITTIVVHIYEDGIKGCDALNSSLTCLAAEYPIVKFCKIKASNTGAGDRFSLDVLPTLLIYKGGELISNFISVAEQFAEEFFAGDVESFLNEYGLLPEREVHVLEHTKIEEEDVE</sequence>
<dbReference type="EMBL" id="M33478">
    <property type="protein sequence ID" value="AAA35486.1"/>
    <property type="molecule type" value="mRNA"/>
</dbReference>
<dbReference type="EMBL" id="M38059">
    <property type="protein sequence ID" value="AAA36210.1"/>
    <property type="molecule type" value="Genomic_DNA"/>
</dbReference>
<dbReference type="EMBL" id="M60720">
    <property type="protein sequence ID" value="AAA36210.1"/>
    <property type="status" value="JOINED"/>
    <property type="molecule type" value="Genomic_DNA"/>
</dbReference>
<dbReference type="EMBL" id="M38058">
    <property type="protein sequence ID" value="AAA36210.1"/>
    <property type="status" value="JOINED"/>
    <property type="molecule type" value="Genomic_DNA"/>
</dbReference>
<dbReference type="EMBL" id="AF076463">
    <property type="protein sequence ID" value="AAD43141.1"/>
    <property type="molecule type" value="mRNA"/>
</dbReference>
<dbReference type="EMBL" id="AF076464">
    <property type="protein sequence ID" value="AAD43142.1"/>
    <property type="molecule type" value="mRNA"/>
</dbReference>
<dbReference type="EMBL" id="AL596220">
    <property type="status" value="NOT_ANNOTATED_CDS"/>
    <property type="molecule type" value="Genomic_DNA"/>
</dbReference>
<dbReference type="EMBL" id="AL663036">
    <property type="status" value="NOT_ANNOTATED_CDS"/>
    <property type="molecule type" value="Genomic_DNA"/>
</dbReference>
<dbReference type="EMBL" id="CH471067">
    <property type="protein sequence ID" value="EAW91212.1"/>
    <property type="molecule type" value="Genomic_DNA"/>
</dbReference>
<dbReference type="CCDS" id="CCDS1370.1">
    <molecule id="P20941-1"/>
</dbReference>
<dbReference type="CCDS" id="CCDS41447.1">
    <molecule id="P20941-2"/>
</dbReference>
<dbReference type="PIR" id="A35422">
    <property type="entry name" value="A35422"/>
</dbReference>
<dbReference type="RefSeq" id="NP_002588.3">
    <molecule id="P20941-1"/>
    <property type="nucleotide sequence ID" value="NM_002597.4"/>
</dbReference>
<dbReference type="RefSeq" id="NP_072098.1">
    <molecule id="P20941-2"/>
    <property type="nucleotide sequence ID" value="NM_022576.4"/>
</dbReference>
<dbReference type="RefSeq" id="XP_011507905.1">
    <property type="nucleotide sequence ID" value="XM_011509603.2"/>
</dbReference>
<dbReference type="SMR" id="P20941"/>
<dbReference type="BioGRID" id="111159">
    <property type="interactions" value="11"/>
</dbReference>
<dbReference type="FunCoup" id="P20941">
    <property type="interactions" value="4"/>
</dbReference>
<dbReference type="IntAct" id="P20941">
    <property type="interactions" value="5"/>
</dbReference>
<dbReference type="STRING" id="9606.ENSP00000375855"/>
<dbReference type="GlyGen" id="P20941">
    <property type="glycosylation" value="2 sites, 1 O-linked glycan (1 site)"/>
</dbReference>
<dbReference type="iPTMnet" id="P20941"/>
<dbReference type="PhosphoSitePlus" id="P20941"/>
<dbReference type="BioMuta" id="PDC"/>
<dbReference type="DMDM" id="130134"/>
<dbReference type="jPOST" id="P20941"/>
<dbReference type="MassIVE" id="P20941"/>
<dbReference type="PaxDb" id="9606-ENSP00000375855"/>
<dbReference type="PeptideAtlas" id="P20941"/>
<dbReference type="ProteomicsDB" id="53830">
    <molecule id="P20941-1"/>
</dbReference>
<dbReference type="ProteomicsDB" id="53831">
    <molecule id="P20941-2"/>
</dbReference>
<dbReference type="Antibodypedia" id="34456">
    <property type="antibodies" value="108 antibodies from 20 providers"/>
</dbReference>
<dbReference type="DNASU" id="5132"/>
<dbReference type="Ensembl" id="ENST00000391997.3">
    <molecule id="P20941-1"/>
    <property type="protein sequence ID" value="ENSP00000375855.2"/>
    <property type="gene ID" value="ENSG00000116703.14"/>
</dbReference>
<dbReference type="Ensembl" id="ENST00000497198.1">
    <molecule id="P20941-2"/>
    <property type="protein sequence ID" value="ENSP00000422775.1"/>
    <property type="gene ID" value="ENSG00000116703.14"/>
</dbReference>
<dbReference type="GeneID" id="5132"/>
<dbReference type="KEGG" id="hsa:5132"/>
<dbReference type="MANE-Select" id="ENST00000391997.3">
    <property type="protein sequence ID" value="ENSP00000375855.2"/>
    <property type="RefSeq nucleotide sequence ID" value="NM_002597.5"/>
    <property type="RefSeq protein sequence ID" value="NP_002588.3"/>
</dbReference>
<dbReference type="UCSC" id="uc001grz.4">
    <molecule id="P20941-1"/>
    <property type="organism name" value="human"/>
</dbReference>
<dbReference type="AGR" id="HGNC:8759"/>
<dbReference type="CTD" id="5132"/>
<dbReference type="DisGeNET" id="5132"/>
<dbReference type="GeneCards" id="PDC"/>
<dbReference type="HGNC" id="HGNC:8759">
    <property type="gene designation" value="PDC"/>
</dbReference>
<dbReference type="HPA" id="ENSG00000116703">
    <property type="expression patterns" value="Tissue enriched (retina)"/>
</dbReference>
<dbReference type="MIM" id="171490">
    <property type="type" value="gene"/>
</dbReference>
<dbReference type="neXtProt" id="NX_P20941"/>
<dbReference type="OpenTargets" id="ENSG00000116703"/>
<dbReference type="PharmGKB" id="PA33109"/>
<dbReference type="VEuPathDB" id="HostDB:ENSG00000116703"/>
<dbReference type="eggNOG" id="KOG3171">
    <property type="taxonomic scope" value="Eukaryota"/>
</dbReference>
<dbReference type="GeneTree" id="ENSGT00940000156236"/>
<dbReference type="HOGENOM" id="CLU_085598_1_0_1"/>
<dbReference type="InParanoid" id="P20941"/>
<dbReference type="OMA" id="PKYGYLC"/>
<dbReference type="OrthoDB" id="70588at2759"/>
<dbReference type="PAN-GO" id="P20941">
    <property type="GO annotations" value="1 GO annotation based on evolutionary models"/>
</dbReference>
<dbReference type="PhylomeDB" id="P20941"/>
<dbReference type="TreeFam" id="TF315179"/>
<dbReference type="PathwayCommons" id="P20941"/>
<dbReference type="SignaLink" id="P20941"/>
<dbReference type="SIGNOR" id="P20941"/>
<dbReference type="BioGRID-ORCS" id="5132">
    <property type="hits" value="19 hits in 1116 CRISPR screens"/>
</dbReference>
<dbReference type="ChiTaRS" id="PDC">
    <property type="organism name" value="human"/>
</dbReference>
<dbReference type="GeneWiki" id="Phosducin"/>
<dbReference type="GenomeRNAi" id="5132"/>
<dbReference type="Pharos" id="P20941">
    <property type="development level" value="Tbio"/>
</dbReference>
<dbReference type="PRO" id="PR:P20941"/>
<dbReference type="Proteomes" id="UP000005640">
    <property type="component" value="Chromosome 1"/>
</dbReference>
<dbReference type="RNAct" id="P20941">
    <property type="molecule type" value="protein"/>
</dbReference>
<dbReference type="Bgee" id="ENSG00000116703">
    <property type="expression patterns" value="Expressed in male germ line stem cell (sensu Vertebrata) in testis and 84 other cell types or tissues"/>
</dbReference>
<dbReference type="ExpressionAtlas" id="P20941">
    <property type="expression patterns" value="baseline and differential"/>
</dbReference>
<dbReference type="GO" id="GO:0005829">
    <property type="term" value="C:cytosol"/>
    <property type="evidence" value="ECO:0007669"/>
    <property type="project" value="UniProtKB-SubCell"/>
</dbReference>
<dbReference type="GO" id="GO:0005634">
    <property type="term" value="C:nucleus"/>
    <property type="evidence" value="ECO:0007669"/>
    <property type="project" value="UniProtKB-SubCell"/>
</dbReference>
<dbReference type="GO" id="GO:0001917">
    <property type="term" value="C:photoreceptor inner segment"/>
    <property type="evidence" value="ECO:0007669"/>
    <property type="project" value="UniProtKB-SubCell"/>
</dbReference>
<dbReference type="GO" id="GO:0001750">
    <property type="term" value="C:photoreceptor outer segment"/>
    <property type="evidence" value="ECO:0000318"/>
    <property type="project" value="GO_Central"/>
</dbReference>
<dbReference type="GO" id="GO:0004859">
    <property type="term" value="F:phospholipase inhibitor activity"/>
    <property type="evidence" value="ECO:0000304"/>
    <property type="project" value="ProtInc"/>
</dbReference>
<dbReference type="GO" id="GO:0007186">
    <property type="term" value="P:G protein-coupled receptor signaling pathway"/>
    <property type="evidence" value="ECO:0000304"/>
    <property type="project" value="ProtInc"/>
</dbReference>
<dbReference type="GO" id="GO:0007602">
    <property type="term" value="P:phototransduction"/>
    <property type="evidence" value="ECO:0000304"/>
    <property type="project" value="ProtInc"/>
</dbReference>
<dbReference type="GO" id="GO:0008277">
    <property type="term" value="P:regulation of G protein-coupled receptor signaling pathway"/>
    <property type="evidence" value="ECO:0007669"/>
    <property type="project" value="InterPro"/>
</dbReference>
<dbReference type="GO" id="GO:0007601">
    <property type="term" value="P:visual perception"/>
    <property type="evidence" value="ECO:0007669"/>
    <property type="project" value="UniProtKB-KW"/>
</dbReference>
<dbReference type="CDD" id="cd02987">
    <property type="entry name" value="Phd_like_Phd"/>
    <property type="match status" value="1"/>
</dbReference>
<dbReference type="FunFam" id="3.40.30.10:FF:000072">
    <property type="entry name" value="Phosducin like"/>
    <property type="match status" value="1"/>
</dbReference>
<dbReference type="FunFam" id="1.10.168.10:FF:000002">
    <property type="entry name" value="Phosducin, isoform CRA_a"/>
    <property type="match status" value="1"/>
</dbReference>
<dbReference type="Gene3D" id="3.40.30.10">
    <property type="entry name" value="Glutaredoxin"/>
    <property type="match status" value="1"/>
</dbReference>
<dbReference type="Gene3D" id="1.10.168.10">
    <property type="entry name" value="Phosducin, domain 2"/>
    <property type="match status" value="2"/>
</dbReference>
<dbReference type="InterPro" id="IPR001200">
    <property type="entry name" value="Phosducin"/>
</dbReference>
<dbReference type="InterPro" id="IPR051499">
    <property type="entry name" value="Phosducin-like_reg"/>
</dbReference>
<dbReference type="InterPro" id="IPR023196">
    <property type="entry name" value="Phosducin_N_dom_sf"/>
</dbReference>
<dbReference type="InterPro" id="IPR024253">
    <property type="entry name" value="Phosducin_thioredoxin-like_dom"/>
</dbReference>
<dbReference type="InterPro" id="IPR036249">
    <property type="entry name" value="Thioredoxin-like_sf"/>
</dbReference>
<dbReference type="PANTHER" id="PTHR46052:SF3">
    <property type="entry name" value="PHOSDUCIN"/>
    <property type="match status" value="1"/>
</dbReference>
<dbReference type="PANTHER" id="PTHR46052">
    <property type="entry name" value="PHOSDUCIN-LIKE PROTEIN"/>
    <property type="match status" value="1"/>
</dbReference>
<dbReference type="Pfam" id="PF02114">
    <property type="entry name" value="Phosducin"/>
    <property type="match status" value="1"/>
</dbReference>
<dbReference type="PRINTS" id="PR00677">
    <property type="entry name" value="PHOSDUCIN"/>
</dbReference>
<dbReference type="SUPFAM" id="SSF52833">
    <property type="entry name" value="Thioredoxin-like"/>
    <property type="match status" value="1"/>
</dbReference>
<keyword id="KW-0025">Alternative splicing</keyword>
<keyword id="KW-0966">Cell projection</keyword>
<keyword id="KW-0969">Cilium</keyword>
<keyword id="KW-0963">Cytoplasm</keyword>
<keyword id="KW-0539">Nucleus</keyword>
<keyword id="KW-0597">Phosphoprotein</keyword>
<keyword id="KW-1267">Proteomics identification</keyword>
<keyword id="KW-1185">Reference proteome</keyword>
<keyword id="KW-0716">Sensory transduction</keyword>
<keyword id="KW-0844">Vision</keyword>